<dbReference type="EMBL" id="GT028643">
    <property type="status" value="NOT_ANNOTATED_CDS"/>
    <property type="molecule type" value="mRNA"/>
</dbReference>
<dbReference type="EMBL" id="GT028645">
    <property type="status" value="NOT_ANNOTATED_CDS"/>
    <property type="molecule type" value="mRNA"/>
</dbReference>
<dbReference type="PDB" id="7LGV">
    <property type="method" value="NMR"/>
    <property type="chains" value="A=38-85"/>
</dbReference>
<dbReference type="PDBsum" id="7LGV"/>
<dbReference type="SMR" id="P0CI42"/>
<dbReference type="GO" id="GO:0005576">
    <property type="term" value="C:extracellular region"/>
    <property type="evidence" value="ECO:0007669"/>
    <property type="project" value="UniProtKB-SubCell"/>
</dbReference>
<dbReference type="GO" id="GO:0015459">
    <property type="term" value="F:potassium channel regulator activity"/>
    <property type="evidence" value="ECO:0007669"/>
    <property type="project" value="UniProtKB-KW"/>
</dbReference>
<dbReference type="GO" id="GO:0090729">
    <property type="term" value="F:toxin activity"/>
    <property type="evidence" value="ECO:0007669"/>
    <property type="project" value="UniProtKB-KW"/>
</dbReference>
<dbReference type="InterPro" id="IPR029237">
    <property type="entry name" value="Long_scorpion_toxin_alpha/beta"/>
</dbReference>
<dbReference type="Pfam" id="PF14866">
    <property type="entry name" value="Scorpion_toxin_alpha-beta"/>
    <property type="match status" value="1"/>
</dbReference>
<dbReference type="PROSITE" id="PS51862">
    <property type="entry name" value="BSPN_CSAB"/>
    <property type="match status" value="1"/>
</dbReference>
<comment type="function">
    <molecule>Isoform 1</molecule>
    <text evidence="3 4">Toxin with activity on voltage-gated potassium channels. Moderately and reversibly blocks up to 50% of the activity of Kv7.1/KCNQ1 (tested at 22 uM) (PubMed:36918120). 3D-structure modeling of the KCNQ1-toxin complex shows that the toxin interacts with the channel pore domain (PubMed:36918120). Additionally, shows a very weak effect to block voltage-gated potassium channel Kv1.1/KCNA1 (PubMed:20663230).</text>
</comment>
<comment type="function">
    <molecule>Isoform 2</molecule>
    <text evidence="3">Has a very weak effect to block voltage-gated potassium channel Kv1.1/KCNA1 (PubMed:20663230).</text>
</comment>
<comment type="subcellular location">
    <subcellularLocation>
        <location evidence="8">Secreted</location>
    </subcellularLocation>
</comment>
<comment type="alternative products">
    <event type="alternative splicing"/>
    <isoform>
        <id>P0CI42-1</id>
        <name>1</name>
        <sequence type="displayed"/>
    </isoform>
    <isoform>
        <id>P0CI42-2</id>
        <name>2</name>
        <sequence type="described" ref="VSP_040456"/>
    </isoform>
</comment>
<comment type="tissue specificity">
    <text evidence="8">Expressed by the venom gland.</text>
</comment>
<comment type="domain">
    <text evidence="7">Contains 2 domains: a N-terminal domain that is unstructured or forms an alpha-helix in presence of membranes and a CS-alpha/beta C-terminal domain, which consists of an alpha-helix disulfide-linked to antiparallel beta-sheets.</text>
</comment>
<comment type="miscellaneous">
    <molecule>Isoform 1</molecule>
    <text evidence="4">Negative results: has no effect on insect voltage-gated potassium channel Shaker-IR (tested at 22 uM).</text>
</comment>
<comment type="similarity">
    <text evidence="7">Belongs to the long chain scorpion toxin family. Class 2 subfamily.</text>
</comment>
<name>KBX23_LYCMC</name>
<proteinExistence type="evidence at protein level"/>
<reference key="1">
    <citation type="journal article" date="2010" name="BMC Genomics">
        <title>Comparative venom gland transcriptome analysis of the scorpion Lychas mucronatus reveals intraspecific toxic gene diversity and new venomous components.</title>
        <authorList>
            <person name="Zhao R."/>
            <person name="Ma Y."/>
            <person name="He Y."/>
            <person name="Di Z."/>
            <person name="Wu Y.-L."/>
            <person name="Cao Z.-J."/>
            <person name="Li W.-X."/>
        </authorList>
    </citation>
    <scope>NUCLEOTIDE SEQUENCE [MRNA] (ISOFORMS 1 AND 2)</scope>
    <scope>FUNCTION</scope>
    <scope>ALTERNATIVE SPLICING</scope>
    <source>
        <strain>Yunnan</strain>
        <tissue>Venom gland</tissue>
    </source>
</reference>
<reference evidence="9" key="2">
    <citation type="journal article" date="2023" name="Biochim. Biophys. Acta">
        <title>Beta-KTx14.3, a scorpion toxin, blocks the human potassium channel KCNQ1.</title>
        <authorList>
            <person name="Titaux-Delgado G."/>
            <person name="Lopez-Giraldo A.E."/>
            <person name="Carrillo E."/>
            <person name="Cofas-Vargas L.F."/>
            <person name="Carranza L.E."/>
            <person name="Lopez-Vera E."/>
            <person name="Garcia-Hernandez E."/>
            <person name="Del Rio-Portilla F."/>
        </authorList>
    </citation>
    <scope>STRUCTURE BY NMR OF 38-85</scope>
    <scope>FUNCTION</scope>
    <scope>DISULFIDE BONDS</scope>
    <scope>RECOMBINANT EXPRESSION</scope>
    <scope>3D-STRUCTURE MODELING IN COMPLEX WITH KCNQ1 CHANNEL</scope>
</reference>
<keyword id="KW-0002">3D-structure</keyword>
<keyword id="KW-0025">Alternative splicing</keyword>
<keyword id="KW-1015">Disulfide bond</keyword>
<keyword id="KW-0872">Ion channel impairing toxin</keyword>
<keyword id="KW-0528">Neurotoxin</keyword>
<keyword id="KW-0632">Potassium channel impairing toxin</keyword>
<keyword id="KW-0964">Secreted</keyword>
<keyword id="KW-0732">Signal</keyword>
<keyword id="KW-0800">Toxin</keyword>
<keyword id="KW-1220">Voltage-gated potassium channel impairing toxin</keyword>
<organism>
    <name type="scientific">Lychas mucronatus</name>
    <name type="common">Chinese swimming scorpion</name>
    <dbReference type="NCBI Taxonomy" id="172552"/>
    <lineage>
        <taxon>Eukaryota</taxon>
        <taxon>Metazoa</taxon>
        <taxon>Ecdysozoa</taxon>
        <taxon>Arthropoda</taxon>
        <taxon>Chelicerata</taxon>
        <taxon>Arachnida</taxon>
        <taxon>Scorpiones</taxon>
        <taxon>Buthida</taxon>
        <taxon>Buthoidea</taxon>
        <taxon>Buthidae</taxon>
        <taxon>Lychas</taxon>
    </lineage>
</organism>
<sequence>MKQYIFFLALIVLTATFAEAGKKTEILDKVKKVFSKGIAGVADLNNMSELGCPFIEKWCEDHCESKKQVGKCENFDCSCVKLGGK</sequence>
<protein>
    <recommendedName>
        <fullName evidence="6">Neurotoxin beta-KTx 14.3</fullName>
    </recommendedName>
</protein>
<feature type="signal peptide" evidence="1">
    <location>
        <begin position="1"/>
        <end position="20"/>
    </location>
</feature>
<feature type="propeptide" id="PRO_0000403850" evidence="7">
    <location>
        <begin position="21"/>
        <end position="37"/>
    </location>
</feature>
<feature type="chain" id="PRO_0000403851" description="Neurotoxin beta-KTx 14.3">
    <location>
        <begin position="38"/>
        <end position="85"/>
    </location>
</feature>
<feature type="domain" description="BetaSPN-type CS-alpha/beta" evidence="2">
    <location>
        <begin position="49"/>
        <end position="85"/>
    </location>
</feature>
<feature type="disulfide bond" evidence="4 10">
    <location>
        <begin position="52"/>
        <end position="72"/>
    </location>
</feature>
<feature type="disulfide bond" evidence="4 10">
    <location>
        <begin position="59"/>
        <end position="77"/>
    </location>
</feature>
<feature type="disulfide bond" evidence="4 10">
    <location>
        <begin position="63"/>
        <end position="79"/>
    </location>
</feature>
<feature type="splice variant" id="VSP_040456" description="In isoform 2." evidence="5">
    <location>
        <begin position="37"/>
        <end position="39"/>
    </location>
</feature>
<feature type="helix" evidence="11">
    <location>
        <begin position="49"/>
        <end position="51"/>
    </location>
</feature>
<feature type="turn" evidence="11">
    <location>
        <begin position="53"/>
        <end position="55"/>
    </location>
</feature>
<feature type="helix" evidence="11">
    <location>
        <begin position="56"/>
        <end position="65"/>
    </location>
</feature>
<feature type="strand" evidence="11">
    <location>
        <begin position="74"/>
        <end position="78"/>
    </location>
</feature>
<evidence type="ECO:0000255" key="1"/>
<evidence type="ECO:0000255" key="2">
    <source>
        <dbReference type="PROSITE-ProRule" id="PRU01209"/>
    </source>
</evidence>
<evidence type="ECO:0000269" key="3">
    <source>
    </source>
</evidence>
<evidence type="ECO:0000269" key="4">
    <source>
    </source>
</evidence>
<evidence type="ECO:0000303" key="5">
    <source>
    </source>
</evidence>
<evidence type="ECO:0000303" key="6">
    <source>
    </source>
</evidence>
<evidence type="ECO:0000305" key="7"/>
<evidence type="ECO:0000305" key="8">
    <source>
    </source>
</evidence>
<evidence type="ECO:0000312" key="9">
    <source>
        <dbReference type="PDB" id="7LGV"/>
    </source>
</evidence>
<evidence type="ECO:0007744" key="10">
    <source>
        <dbReference type="PDB" id="7LGV"/>
    </source>
</evidence>
<evidence type="ECO:0007829" key="11">
    <source>
        <dbReference type="PDB" id="7LGV"/>
    </source>
</evidence>
<accession>P0CI42</accession>